<feature type="chain" id="PRO_0000295361" description="PAN2-PAN3 deadenylation complex subunit PAN3">
    <location>
        <begin position="1"/>
        <end position="653"/>
    </location>
</feature>
<feature type="zinc finger region" description="C3H1-type" evidence="1">
    <location>
        <begin position="19"/>
        <end position="48"/>
    </location>
</feature>
<feature type="region of interest" description="Disordered" evidence="2">
    <location>
        <begin position="1"/>
        <end position="21"/>
    </location>
</feature>
<feature type="region of interest" description="Disordered" evidence="2">
    <location>
        <begin position="45"/>
        <end position="128"/>
    </location>
</feature>
<feature type="region of interest" description="Pseudokinase domain" evidence="1">
    <location>
        <begin position="256"/>
        <end position="516"/>
    </location>
</feature>
<feature type="region of interest" description="Knob domain" evidence="1">
    <location>
        <begin position="556"/>
        <end position="653"/>
    </location>
</feature>
<feature type="coiled-coil region" evidence="1">
    <location>
        <begin position="517"/>
        <end position="555"/>
    </location>
</feature>
<feature type="compositionally biased region" description="Low complexity" evidence="2">
    <location>
        <begin position="68"/>
        <end position="95"/>
    </location>
</feature>
<feature type="compositionally biased region" description="Polar residues" evidence="2">
    <location>
        <begin position="108"/>
        <end position="119"/>
    </location>
</feature>
<feature type="binding site" evidence="1">
    <location>
        <position position="308"/>
    </location>
    <ligand>
        <name>ATP</name>
        <dbReference type="ChEBI" id="CHEBI:30616"/>
    </ligand>
</feature>
<feature type="binding site" evidence="1">
    <location>
        <begin position="357"/>
        <end position="364"/>
    </location>
    <ligand>
        <name>ATP</name>
        <dbReference type="ChEBI" id="CHEBI:30616"/>
    </ligand>
</feature>
<feature type="binding site" evidence="1">
    <location>
        <begin position="416"/>
        <end position="417"/>
    </location>
    <ligand>
        <name>ATP</name>
        <dbReference type="ChEBI" id="CHEBI:30616"/>
    </ligand>
</feature>
<organism>
    <name type="scientific">Aspergillus terreus (strain NIH 2624 / FGSC A1156)</name>
    <dbReference type="NCBI Taxonomy" id="341663"/>
    <lineage>
        <taxon>Eukaryota</taxon>
        <taxon>Fungi</taxon>
        <taxon>Dikarya</taxon>
        <taxon>Ascomycota</taxon>
        <taxon>Pezizomycotina</taxon>
        <taxon>Eurotiomycetes</taxon>
        <taxon>Eurotiomycetidae</taxon>
        <taxon>Eurotiales</taxon>
        <taxon>Aspergillaceae</taxon>
        <taxon>Aspergillus</taxon>
        <taxon>Aspergillus subgen. Circumdati</taxon>
    </lineage>
</organism>
<gene>
    <name evidence="1" type="primary">pan3</name>
    <name type="ORF">ATEG_00633</name>
</gene>
<sequence length="653" mass="72440">MASDSRRGTGSPKMKGRENAKDTLCRNVTIYGRCRYEDKGCVYNHDPNKTNSAYQSDSKRRLNVDSPSFTPSLLSSNGSSPTSSSATLKKTTTISPKAANAAPFQPRGISSRSNASTPSARAESAAPDWSVAEVQEFVPQGFETSHMASLQGNGNGPVPSTSPFDPFVTTSNPLAAANAVGPVQANPFSPDTAAAALGGATFFTGQTGFQPVQYHLYAPIGPHSQNTLGYQRNVHDLFLPNDFREELQKKAAATLQTLPNTQLPAQVDYFHSLVPLDLNHQKNATIFGFPSWVYKAQSSKDGNFYALRRLEGFRLTNEKAIRSVQAWKRVCNGSVVTVHDAFTSRSFQDSSLIFVTDYHPLSKTLAEQHLSAGNRFQGRSNTHIPEQVLWGYMTQIANALKAIHSNGLAAKIIDPSKILLTGRNRIRLNACAIMDVVQFDTQRSIADLQHQDLVSFGQLIVTLGANSPSVMHNPTKAMEHFTRAYSPQMKNSVFWLLNSMQKDQDHTIDIFITGISSQLMSTFDSALHMDDQLTSDLSRELENGRLVRLMTKLNFINERPEYEHDRQWSENGERYFLKIFRDYVFHQVDAHGDPVVDLGHVLACLNKLDAGSDEKITLVSRDEQSCFIVSYKEIKKALESSFQALLKPTRRVH</sequence>
<keyword id="KW-0067">ATP-binding</keyword>
<keyword id="KW-0175">Coiled coil</keyword>
<keyword id="KW-0963">Cytoplasm</keyword>
<keyword id="KW-0479">Metal-binding</keyword>
<keyword id="KW-0507">mRNA processing</keyword>
<keyword id="KW-0547">Nucleotide-binding</keyword>
<keyword id="KW-1185">Reference proteome</keyword>
<keyword id="KW-0862">Zinc</keyword>
<keyword id="KW-0863">Zinc-finger</keyword>
<proteinExistence type="inferred from homology"/>
<comment type="function">
    <text evidence="1">Regulatory subunit of the poly(A)-nuclease (PAN) deadenylation complex, one of two cytoplasmic mRNA deadenylases involved in mRNA turnover. PAN specifically shortens poly(A) tails of RNA and the activity is stimulated by poly(A)-binding protein pab1. PAN deadenylation is followed by rapid degradation of the shortened mRNA tails by the CCR4-NOT complex. Deadenylated mRNAs are then degraded by two alternative mechanisms, namely exosome-mediated 3'-5' exonucleolytic degradation, or deadenylation-dependent mRNA decaping and subsequent 5'-3' exonucleolytic degradation by xrn1. May also be involved in post-transcriptional maturation of mRNA poly(A) tails. pan3 acts as a positive regulator for PAN activity, recruiting the catalytic subunit pan2 to mRNA via its interaction with RNA and with pab1.</text>
</comment>
<comment type="subunit">
    <text evidence="1">Homodimer. Forms a heterotrimer with a catalytic subunit pan2 to form the poly(A)-nuclease (PAN) deadenylation complex. Interacts (via PAM-2 motif) with poly(A)-binding protein pab1 (via PABC domain), conferring substrate specificity of the enzyme complex.</text>
</comment>
<comment type="subcellular location">
    <subcellularLocation>
        <location evidence="1">Cytoplasm</location>
    </subcellularLocation>
</comment>
<comment type="domain">
    <text evidence="1">The N-terminal zinc finger binds to poly(A) RNA.</text>
</comment>
<comment type="domain">
    <text evidence="1">Contains a pseudokinase domain. The protein kinase domain is predicted to be catalytically inactive because some of the residues important for catalytic activity are substituted and it lacks the equivalent of the binding site for a peptide substrate. However, it has retained an ATP-binding site and ATP-binding is required for mRNA degradation, stimulating the activity of the pan2 nuclease in vitro. The nucleotide-binding site is juxtaposed to the RNase active site of pan2 in the complex and may actually bind nucleosides of a poly(A) RNA rather than ATP, feeding the poly(A)-tail to the active site of the deadenylase and thus increasing the efficiency with which this distributive enzyme degrades oligo(A) RNAs.</text>
</comment>
<comment type="domain">
    <text evidence="1">The pseudokinase domain, the coiled-coil (CC), and C-terminal knob domain (CK) form a structural unit (PKC) that forms an extensive high-affinity interaction surface for pan2.</text>
</comment>
<comment type="similarity">
    <text evidence="1">Belongs to the protein kinase superfamily. PAN3 family.</text>
</comment>
<comment type="sequence caution" evidence="3">
    <conflict type="erroneous gene model prediction">
        <sequence resource="EMBL-CDS" id="EAU39279"/>
    </conflict>
</comment>
<reference key="1">
    <citation type="submission" date="2005-09" db="EMBL/GenBank/DDBJ databases">
        <title>Annotation of the Aspergillus terreus NIH2624 genome.</title>
        <authorList>
            <person name="Birren B.W."/>
            <person name="Lander E.S."/>
            <person name="Galagan J.E."/>
            <person name="Nusbaum C."/>
            <person name="Devon K."/>
            <person name="Henn M."/>
            <person name="Ma L.-J."/>
            <person name="Jaffe D.B."/>
            <person name="Butler J."/>
            <person name="Alvarez P."/>
            <person name="Gnerre S."/>
            <person name="Grabherr M."/>
            <person name="Kleber M."/>
            <person name="Mauceli E.W."/>
            <person name="Brockman W."/>
            <person name="Rounsley S."/>
            <person name="Young S.K."/>
            <person name="LaButti K."/>
            <person name="Pushparaj V."/>
            <person name="DeCaprio D."/>
            <person name="Crawford M."/>
            <person name="Koehrsen M."/>
            <person name="Engels R."/>
            <person name="Montgomery P."/>
            <person name="Pearson M."/>
            <person name="Howarth C."/>
            <person name="Larson L."/>
            <person name="Luoma S."/>
            <person name="White J."/>
            <person name="Alvarado L."/>
            <person name="Kodira C.D."/>
            <person name="Zeng Q."/>
            <person name="Oleary S."/>
            <person name="Yandava C."/>
            <person name="Denning D.W."/>
            <person name="Nierman W.C."/>
            <person name="Milne T."/>
            <person name="Madden K."/>
        </authorList>
    </citation>
    <scope>NUCLEOTIDE SEQUENCE [LARGE SCALE GENOMIC DNA]</scope>
    <source>
        <strain>NIH 2624 / FGSC A1156</strain>
    </source>
</reference>
<protein>
    <recommendedName>
        <fullName evidence="1">PAN2-PAN3 deadenylation complex subunit PAN3</fullName>
    </recommendedName>
    <alternativeName>
        <fullName evidence="1">PAB1P-dependent poly(A)-specific ribonuclease</fullName>
    </alternativeName>
    <alternativeName>
        <fullName evidence="1">Poly(A)-nuclease deadenylation complex subunit 3</fullName>
        <shortName evidence="1">PAN deadenylation complex subunit 3</shortName>
    </alternativeName>
</protein>
<name>PAN3_ASPTN</name>
<dbReference type="EMBL" id="CH476594">
    <property type="protein sequence ID" value="EAU39279.1"/>
    <property type="status" value="ALT_SEQ"/>
    <property type="molecule type" value="Genomic_DNA"/>
</dbReference>
<dbReference type="RefSeq" id="XP_001210719.1">
    <property type="nucleotide sequence ID" value="XM_001210719.1"/>
</dbReference>
<dbReference type="SMR" id="Q0D0A1"/>
<dbReference type="STRING" id="341663.Q0D0A1"/>
<dbReference type="GeneID" id="4355388"/>
<dbReference type="eggNOG" id="KOG3741">
    <property type="taxonomic scope" value="Eukaryota"/>
</dbReference>
<dbReference type="OrthoDB" id="204958at2759"/>
<dbReference type="Proteomes" id="UP000007963">
    <property type="component" value="Unassembled WGS sequence"/>
</dbReference>
<dbReference type="GO" id="GO:0000932">
    <property type="term" value="C:P-body"/>
    <property type="evidence" value="ECO:0007669"/>
    <property type="project" value="TreeGrafter"/>
</dbReference>
<dbReference type="GO" id="GO:0031251">
    <property type="term" value="C:PAN complex"/>
    <property type="evidence" value="ECO:0007669"/>
    <property type="project" value="UniProtKB-UniRule"/>
</dbReference>
<dbReference type="GO" id="GO:0005524">
    <property type="term" value="F:ATP binding"/>
    <property type="evidence" value="ECO:0007669"/>
    <property type="project" value="UniProtKB-UniRule"/>
</dbReference>
<dbReference type="GO" id="GO:0008143">
    <property type="term" value="F:poly(A) binding"/>
    <property type="evidence" value="ECO:0007669"/>
    <property type="project" value="TreeGrafter"/>
</dbReference>
<dbReference type="GO" id="GO:0004672">
    <property type="term" value="F:protein kinase activity"/>
    <property type="evidence" value="ECO:0007669"/>
    <property type="project" value="InterPro"/>
</dbReference>
<dbReference type="GO" id="GO:0008270">
    <property type="term" value="F:zinc ion binding"/>
    <property type="evidence" value="ECO:0007669"/>
    <property type="project" value="UniProtKB-KW"/>
</dbReference>
<dbReference type="GO" id="GO:0006397">
    <property type="term" value="P:mRNA processing"/>
    <property type="evidence" value="ECO:0007669"/>
    <property type="project" value="UniProtKB-KW"/>
</dbReference>
<dbReference type="GO" id="GO:0000289">
    <property type="term" value="P:nuclear-transcribed mRNA poly(A) tail shortening"/>
    <property type="evidence" value="ECO:0007669"/>
    <property type="project" value="UniProtKB-UniRule"/>
</dbReference>
<dbReference type="FunFam" id="1.10.287.3700:FF:000001">
    <property type="entry name" value="PAN2-PAN3 deadenylation complex subunit PAN3"/>
    <property type="match status" value="1"/>
</dbReference>
<dbReference type="FunFam" id="1.10.510.10:FF:000520">
    <property type="entry name" value="PAN2-PAN3 deadenylation complex subunit PAN3"/>
    <property type="match status" value="1"/>
</dbReference>
<dbReference type="FunFam" id="1.20.5.5160:FF:000002">
    <property type="entry name" value="PAN2-PAN3 deadenylation complex subunit PAN3"/>
    <property type="match status" value="1"/>
</dbReference>
<dbReference type="Gene3D" id="1.10.287.3700">
    <property type="match status" value="1"/>
</dbReference>
<dbReference type="Gene3D" id="1.20.5.5160">
    <property type="match status" value="1"/>
</dbReference>
<dbReference type="Gene3D" id="6.10.250.3160">
    <property type="match status" value="1"/>
</dbReference>
<dbReference type="Gene3D" id="1.10.510.10">
    <property type="entry name" value="Transferase(Phosphotransferase) domain 1"/>
    <property type="match status" value="1"/>
</dbReference>
<dbReference type="HAMAP" id="MF_03181">
    <property type="entry name" value="PAN3"/>
    <property type="match status" value="1"/>
</dbReference>
<dbReference type="InterPro" id="IPR011009">
    <property type="entry name" value="Kinase-like_dom_sf"/>
</dbReference>
<dbReference type="InterPro" id="IPR030844">
    <property type="entry name" value="PAN3"/>
</dbReference>
<dbReference type="InterPro" id="IPR041332">
    <property type="entry name" value="Pan3_PK"/>
</dbReference>
<dbReference type="InterPro" id="IPR000719">
    <property type="entry name" value="Prot_kinase_dom"/>
</dbReference>
<dbReference type="InterPro" id="IPR000571">
    <property type="entry name" value="Znf_CCCH"/>
</dbReference>
<dbReference type="PANTHER" id="PTHR12272">
    <property type="entry name" value="DEADENYLATION COMPLEX SUBUNIT PAN3"/>
    <property type="match status" value="1"/>
</dbReference>
<dbReference type="PANTHER" id="PTHR12272:SF11">
    <property type="entry name" value="PAN2-PAN3 DEADENYLATION COMPLEX SUBUNIT PAN3"/>
    <property type="match status" value="1"/>
</dbReference>
<dbReference type="Pfam" id="PF18101">
    <property type="entry name" value="Pan3_PK"/>
    <property type="match status" value="1"/>
</dbReference>
<dbReference type="SUPFAM" id="SSF56112">
    <property type="entry name" value="Protein kinase-like (PK-like)"/>
    <property type="match status" value="1"/>
</dbReference>
<dbReference type="PROSITE" id="PS50011">
    <property type="entry name" value="PROTEIN_KINASE_DOM"/>
    <property type="match status" value="1"/>
</dbReference>
<dbReference type="PROSITE" id="PS50103">
    <property type="entry name" value="ZF_C3H1"/>
    <property type="match status" value="1"/>
</dbReference>
<evidence type="ECO:0000255" key="1">
    <source>
        <dbReference type="HAMAP-Rule" id="MF_03181"/>
    </source>
</evidence>
<evidence type="ECO:0000256" key="2">
    <source>
        <dbReference type="SAM" id="MobiDB-lite"/>
    </source>
</evidence>
<evidence type="ECO:0000305" key="3"/>
<accession>Q0D0A1</accession>